<name>ENGB_ECO5E</name>
<accession>B5YZ00</accession>
<gene>
    <name evidence="1" type="primary">engB</name>
    <name type="ordered locus">ECH74115_5309</name>
</gene>
<organism>
    <name type="scientific">Escherichia coli O157:H7 (strain EC4115 / EHEC)</name>
    <dbReference type="NCBI Taxonomy" id="444450"/>
    <lineage>
        <taxon>Bacteria</taxon>
        <taxon>Pseudomonadati</taxon>
        <taxon>Pseudomonadota</taxon>
        <taxon>Gammaproteobacteria</taxon>
        <taxon>Enterobacterales</taxon>
        <taxon>Enterobacteriaceae</taxon>
        <taxon>Escherichia</taxon>
    </lineage>
</organism>
<sequence length="210" mass="23588">MTNLNYQQTHFVMSAPDIRHLPSDTGIEVAFAGRSNAGKSSALNTLTNQKSLARTSKTPGRTQLINLFEVADGKRLVDLPGYGYAEVPEEMKRKWQRALGEYLEKRQSLQGLVVLMDIRHPLKDLDQQMIEWAVDSNIAVLVLLTKADKLASGARKAQLNMVREAVLAFNGDVQVETFSSLKKQGVDKLRQKLDTWFNEMQPVEETQDGE</sequence>
<reference key="1">
    <citation type="journal article" date="2011" name="Proc. Natl. Acad. Sci. U.S.A.">
        <title>Genomic anatomy of Escherichia coli O157:H7 outbreaks.</title>
        <authorList>
            <person name="Eppinger M."/>
            <person name="Mammel M.K."/>
            <person name="Leclerc J.E."/>
            <person name="Ravel J."/>
            <person name="Cebula T.A."/>
        </authorList>
    </citation>
    <scope>NUCLEOTIDE SEQUENCE [LARGE SCALE GENOMIC DNA]</scope>
    <source>
        <strain>EC4115 / EHEC</strain>
    </source>
</reference>
<feature type="chain" id="PRO_1000115970" description="Probable GTP-binding protein EngB">
    <location>
        <begin position="1"/>
        <end position="210"/>
    </location>
</feature>
<feature type="domain" description="EngB-type G" evidence="1">
    <location>
        <begin position="25"/>
        <end position="199"/>
    </location>
</feature>
<feature type="binding site" evidence="1">
    <location>
        <begin position="33"/>
        <end position="40"/>
    </location>
    <ligand>
        <name>GTP</name>
        <dbReference type="ChEBI" id="CHEBI:37565"/>
    </ligand>
</feature>
<feature type="binding site" evidence="1">
    <location>
        <position position="40"/>
    </location>
    <ligand>
        <name>Mg(2+)</name>
        <dbReference type="ChEBI" id="CHEBI:18420"/>
    </ligand>
</feature>
<feature type="binding site" evidence="1">
    <location>
        <begin position="60"/>
        <end position="64"/>
    </location>
    <ligand>
        <name>GTP</name>
        <dbReference type="ChEBI" id="CHEBI:37565"/>
    </ligand>
</feature>
<feature type="binding site" evidence="1">
    <location>
        <position position="62"/>
    </location>
    <ligand>
        <name>Mg(2+)</name>
        <dbReference type="ChEBI" id="CHEBI:18420"/>
    </ligand>
</feature>
<feature type="binding site" evidence="1">
    <location>
        <begin position="78"/>
        <end position="81"/>
    </location>
    <ligand>
        <name>GTP</name>
        <dbReference type="ChEBI" id="CHEBI:37565"/>
    </ligand>
</feature>
<feature type="binding site" evidence="1">
    <location>
        <begin position="145"/>
        <end position="148"/>
    </location>
    <ligand>
        <name>GTP</name>
        <dbReference type="ChEBI" id="CHEBI:37565"/>
    </ligand>
</feature>
<feature type="binding site" evidence="1">
    <location>
        <begin position="178"/>
        <end position="180"/>
    </location>
    <ligand>
        <name>GTP</name>
        <dbReference type="ChEBI" id="CHEBI:37565"/>
    </ligand>
</feature>
<proteinExistence type="inferred from homology"/>
<evidence type="ECO:0000255" key="1">
    <source>
        <dbReference type="HAMAP-Rule" id="MF_00321"/>
    </source>
</evidence>
<keyword id="KW-0131">Cell cycle</keyword>
<keyword id="KW-0132">Cell division</keyword>
<keyword id="KW-0342">GTP-binding</keyword>
<keyword id="KW-0460">Magnesium</keyword>
<keyword id="KW-0479">Metal-binding</keyword>
<keyword id="KW-0547">Nucleotide-binding</keyword>
<keyword id="KW-0717">Septation</keyword>
<protein>
    <recommendedName>
        <fullName evidence="1">Probable GTP-binding protein EngB</fullName>
    </recommendedName>
</protein>
<comment type="function">
    <text evidence="1">Necessary for normal cell division and for the maintenance of normal septation.</text>
</comment>
<comment type="cofactor">
    <cofactor evidence="1">
        <name>Mg(2+)</name>
        <dbReference type="ChEBI" id="CHEBI:18420"/>
    </cofactor>
</comment>
<comment type="similarity">
    <text evidence="1">Belongs to the TRAFAC class TrmE-Era-EngA-EngB-Septin-like GTPase superfamily. EngB GTPase family.</text>
</comment>
<dbReference type="EMBL" id="CP001164">
    <property type="protein sequence ID" value="ACI37652.1"/>
    <property type="molecule type" value="Genomic_DNA"/>
</dbReference>
<dbReference type="SMR" id="B5YZ00"/>
<dbReference type="KEGG" id="ecf:ECH74115_5309"/>
<dbReference type="HOGENOM" id="CLU_033732_1_2_6"/>
<dbReference type="GO" id="GO:0005829">
    <property type="term" value="C:cytosol"/>
    <property type="evidence" value="ECO:0007669"/>
    <property type="project" value="TreeGrafter"/>
</dbReference>
<dbReference type="GO" id="GO:0005525">
    <property type="term" value="F:GTP binding"/>
    <property type="evidence" value="ECO:0007669"/>
    <property type="project" value="UniProtKB-UniRule"/>
</dbReference>
<dbReference type="GO" id="GO:0046872">
    <property type="term" value="F:metal ion binding"/>
    <property type="evidence" value="ECO:0007669"/>
    <property type="project" value="UniProtKB-KW"/>
</dbReference>
<dbReference type="GO" id="GO:0000917">
    <property type="term" value="P:division septum assembly"/>
    <property type="evidence" value="ECO:0007669"/>
    <property type="project" value="UniProtKB-KW"/>
</dbReference>
<dbReference type="CDD" id="cd01876">
    <property type="entry name" value="YihA_EngB"/>
    <property type="match status" value="1"/>
</dbReference>
<dbReference type="FunFam" id="3.40.50.300:FF:000098">
    <property type="entry name" value="Probable GTP-binding protein EngB"/>
    <property type="match status" value="1"/>
</dbReference>
<dbReference type="Gene3D" id="3.40.50.300">
    <property type="entry name" value="P-loop containing nucleotide triphosphate hydrolases"/>
    <property type="match status" value="1"/>
</dbReference>
<dbReference type="HAMAP" id="MF_00321">
    <property type="entry name" value="GTPase_EngB"/>
    <property type="match status" value="1"/>
</dbReference>
<dbReference type="InterPro" id="IPR030393">
    <property type="entry name" value="G_ENGB_dom"/>
</dbReference>
<dbReference type="InterPro" id="IPR006073">
    <property type="entry name" value="GTP-bd"/>
</dbReference>
<dbReference type="InterPro" id="IPR019987">
    <property type="entry name" value="GTP-bd_ribosome_bio_YsxC"/>
</dbReference>
<dbReference type="InterPro" id="IPR027417">
    <property type="entry name" value="P-loop_NTPase"/>
</dbReference>
<dbReference type="NCBIfam" id="TIGR03598">
    <property type="entry name" value="GTPase_YsxC"/>
    <property type="match status" value="1"/>
</dbReference>
<dbReference type="PANTHER" id="PTHR11649:SF13">
    <property type="entry name" value="ENGB-TYPE G DOMAIN-CONTAINING PROTEIN"/>
    <property type="match status" value="1"/>
</dbReference>
<dbReference type="PANTHER" id="PTHR11649">
    <property type="entry name" value="MSS1/TRME-RELATED GTP-BINDING PROTEIN"/>
    <property type="match status" value="1"/>
</dbReference>
<dbReference type="Pfam" id="PF01926">
    <property type="entry name" value="MMR_HSR1"/>
    <property type="match status" value="1"/>
</dbReference>
<dbReference type="SUPFAM" id="SSF52540">
    <property type="entry name" value="P-loop containing nucleoside triphosphate hydrolases"/>
    <property type="match status" value="1"/>
</dbReference>
<dbReference type="PROSITE" id="PS51706">
    <property type="entry name" value="G_ENGB"/>
    <property type="match status" value="1"/>
</dbReference>